<evidence type="ECO:0000255" key="1">
    <source>
        <dbReference type="HAMAP-Rule" id="MF_00388"/>
    </source>
</evidence>
<evidence type="ECO:0000305" key="2"/>
<dbReference type="EC" id="3.5.1.108" evidence="1"/>
<dbReference type="EMBL" id="CP000127">
    <property type="protein sequence ID" value="ABA59300.1"/>
    <property type="status" value="ALT_INIT"/>
    <property type="molecule type" value="Genomic_DNA"/>
</dbReference>
<dbReference type="RefSeq" id="WP_011331078.1">
    <property type="nucleotide sequence ID" value="NC_007484.1"/>
</dbReference>
<dbReference type="SMR" id="Q3J796"/>
<dbReference type="FunCoup" id="Q3J796">
    <property type="interactions" value="418"/>
</dbReference>
<dbReference type="STRING" id="323261.Noc_2854"/>
<dbReference type="KEGG" id="noc:Noc_2854"/>
<dbReference type="eggNOG" id="COG0774">
    <property type="taxonomic scope" value="Bacteria"/>
</dbReference>
<dbReference type="HOGENOM" id="CLU_046528_1_0_6"/>
<dbReference type="InParanoid" id="Q3J796"/>
<dbReference type="UniPathway" id="UPA00359">
    <property type="reaction ID" value="UER00478"/>
</dbReference>
<dbReference type="Proteomes" id="UP000006838">
    <property type="component" value="Chromosome"/>
</dbReference>
<dbReference type="GO" id="GO:0016020">
    <property type="term" value="C:membrane"/>
    <property type="evidence" value="ECO:0007669"/>
    <property type="project" value="GOC"/>
</dbReference>
<dbReference type="GO" id="GO:0046872">
    <property type="term" value="F:metal ion binding"/>
    <property type="evidence" value="ECO:0007669"/>
    <property type="project" value="UniProtKB-KW"/>
</dbReference>
<dbReference type="GO" id="GO:0103117">
    <property type="term" value="F:UDP-3-O-acyl-N-acetylglucosamine deacetylase activity"/>
    <property type="evidence" value="ECO:0007669"/>
    <property type="project" value="UniProtKB-UniRule"/>
</dbReference>
<dbReference type="GO" id="GO:0009245">
    <property type="term" value="P:lipid A biosynthetic process"/>
    <property type="evidence" value="ECO:0007669"/>
    <property type="project" value="UniProtKB-UniRule"/>
</dbReference>
<dbReference type="Gene3D" id="3.30.230.20">
    <property type="entry name" value="lpxc deacetylase, domain 1"/>
    <property type="match status" value="1"/>
</dbReference>
<dbReference type="Gene3D" id="3.30.1700.10">
    <property type="entry name" value="lpxc deacetylase, domain 2"/>
    <property type="match status" value="1"/>
</dbReference>
<dbReference type="HAMAP" id="MF_00388">
    <property type="entry name" value="LpxC"/>
    <property type="match status" value="1"/>
</dbReference>
<dbReference type="InterPro" id="IPR020568">
    <property type="entry name" value="Ribosomal_Su5_D2-typ_SF"/>
</dbReference>
<dbReference type="InterPro" id="IPR004463">
    <property type="entry name" value="UDP-acyl_GlcNac_deAcase"/>
</dbReference>
<dbReference type="InterPro" id="IPR011334">
    <property type="entry name" value="UDP-acyl_GlcNac_deAcase_C"/>
</dbReference>
<dbReference type="InterPro" id="IPR015870">
    <property type="entry name" value="UDP-acyl_N-AcGlcN_deAcase_N"/>
</dbReference>
<dbReference type="NCBIfam" id="TIGR00325">
    <property type="entry name" value="lpxC"/>
    <property type="match status" value="1"/>
</dbReference>
<dbReference type="PANTHER" id="PTHR33694">
    <property type="entry name" value="UDP-3-O-ACYL-N-ACETYLGLUCOSAMINE DEACETYLASE 1, MITOCHONDRIAL-RELATED"/>
    <property type="match status" value="1"/>
</dbReference>
<dbReference type="PANTHER" id="PTHR33694:SF1">
    <property type="entry name" value="UDP-3-O-ACYL-N-ACETYLGLUCOSAMINE DEACETYLASE 1, MITOCHONDRIAL-RELATED"/>
    <property type="match status" value="1"/>
</dbReference>
<dbReference type="Pfam" id="PF03331">
    <property type="entry name" value="LpxC"/>
    <property type="match status" value="1"/>
</dbReference>
<dbReference type="SUPFAM" id="SSF54211">
    <property type="entry name" value="Ribosomal protein S5 domain 2-like"/>
    <property type="match status" value="2"/>
</dbReference>
<protein>
    <recommendedName>
        <fullName evidence="1">UDP-3-O-acyl-N-acetylglucosamine deacetylase</fullName>
        <shortName evidence="1">UDP-3-O-acyl-GlcNAc deacetylase</shortName>
        <ecNumber evidence="1">3.5.1.108</ecNumber>
    </recommendedName>
    <alternativeName>
        <fullName evidence="1">UDP-3-O-[R-3-hydroxymyristoyl]-N-acetylglucosamine deacetylase</fullName>
    </alternativeName>
</protein>
<organism>
    <name type="scientific">Nitrosococcus oceani (strain ATCC 19707 / BCRC 17464 / JCM 30415 / NCIMB 11848 / C-107)</name>
    <dbReference type="NCBI Taxonomy" id="323261"/>
    <lineage>
        <taxon>Bacteria</taxon>
        <taxon>Pseudomonadati</taxon>
        <taxon>Pseudomonadota</taxon>
        <taxon>Gammaproteobacteria</taxon>
        <taxon>Chromatiales</taxon>
        <taxon>Chromatiaceae</taxon>
        <taxon>Nitrosococcus</taxon>
    </lineage>
</organism>
<sequence>MIKQRTLKNVIRATGVGLHTGDIVYLTLRPAAVDTGIVFRRVDLDPPVEIKAREENVGDTTLSSTLVKEGVRIATVEHLLSAFAGLGIDNAYVDLNASEVPIMDGSAGPFVFLIQSAGIVQQEAPKRFILIKKTLLMEEEGKWARFEPFDGFKVSFVIDFDHPAFKGRPQGVEIDFSSTSFVKEVSRARTFGFMKDIERLREANLALGGSLNNAVVVDDYRVINEDGLRYEDEFARHKILDAIGDLYLLGHTLIGAFSGYKSGHALNNKLLCALMADKSAWEIVTFEDDETAAPILFTRPLTAA</sequence>
<proteinExistence type="inferred from homology"/>
<comment type="function">
    <text evidence="1">Catalyzes the hydrolysis of UDP-3-O-myristoyl-N-acetylglucosamine to form UDP-3-O-myristoylglucosamine and acetate, the committed step in lipid A biosynthesis.</text>
</comment>
<comment type="catalytic activity">
    <reaction evidence="1">
        <text>a UDP-3-O-[(3R)-3-hydroxyacyl]-N-acetyl-alpha-D-glucosamine + H2O = a UDP-3-O-[(3R)-3-hydroxyacyl]-alpha-D-glucosamine + acetate</text>
        <dbReference type="Rhea" id="RHEA:67816"/>
        <dbReference type="ChEBI" id="CHEBI:15377"/>
        <dbReference type="ChEBI" id="CHEBI:30089"/>
        <dbReference type="ChEBI" id="CHEBI:137740"/>
        <dbReference type="ChEBI" id="CHEBI:173225"/>
        <dbReference type="EC" id="3.5.1.108"/>
    </reaction>
</comment>
<comment type="cofactor">
    <cofactor evidence="1">
        <name>Zn(2+)</name>
        <dbReference type="ChEBI" id="CHEBI:29105"/>
    </cofactor>
</comment>
<comment type="pathway">
    <text evidence="1">Glycolipid biosynthesis; lipid IV(A) biosynthesis; lipid IV(A) from (3R)-3-hydroxytetradecanoyl-[acyl-carrier-protein] and UDP-N-acetyl-alpha-D-glucosamine: step 2/6.</text>
</comment>
<comment type="similarity">
    <text evidence="1">Belongs to the LpxC family.</text>
</comment>
<comment type="sequence caution" evidence="2">
    <conflict type="erroneous initiation">
        <sequence resource="EMBL-CDS" id="ABA59300"/>
    </conflict>
</comment>
<name>LPXC_NITOC</name>
<feature type="chain" id="PRO_0000253680" description="UDP-3-O-acyl-N-acetylglucosamine deacetylase">
    <location>
        <begin position="1"/>
        <end position="304"/>
    </location>
</feature>
<feature type="active site" description="Proton donor" evidence="1">
    <location>
        <position position="264"/>
    </location>
</feature>
<feature type="binding site" evidence="1">
    <location>
        <position position="78"/>
    </location>
    <ligand>
        <name>Zn(2+)</name>
        <dbReference type="ChEBI" id="CHEBI:29105"/>
    </ligand>
</feature>
<feature type="binding site" evidence="1">
    <location>
        <position position="237"/>
    </location>
    <ligand>
        <name>Zn(2+)</name>
        <dbReference type="ChEBI" id="CHEBI:29105"/>
    </ligand>
</feature>
<feature type="binding site" evidence="1">
    <location>
        <position position="241"/>
    </location>
    <ligand>
        <name>Zn(2+)</name>
        <dbReference type="ChEBI" id="CHEBI:29105"/>
    </ligand>
</feature>
<reference key="1">
    <citation type="journal article" date="2006" name="Appl. Environ. Microbiol.">
        <title>Complete genome sequence of the marine, chemolithoautotrophic, ammonia-oxidizing bacterium Nitrosococcus oceani ATCC 19707.</title>
        <authorList>
            <person name="Klotz M.G."/>
            <person name="Arp D.J."/>
            <person name="Chain P.S.G."/>
            <person name="El-Sheikh A.F."/>
            <person name="Hauser L.J."/>
            <person name="Hommes N.G."/>
            <person name="Larimer F.W."/>
            <person name="Malfatti S.A."/>
            <person name="Norton J.M."/>
            <person name="Poret-Peterson A.T."/>
            <person name="Vergez L.M."/>
            <person name="Ward B.B."/>
        </authorList>
    </citation>
    <scope>NUCLEOTIDE SEQUENCE [LARGE SCALE GENOMIC DNA]</scope>
    <source>
        <strain>ATCC 19707 / BCRC 17464 / JCM 30415 / NCIMB 11848 / C-107</strain>
    </source>
</reference>
<gene>
    <name evidence="1" type="primary">lpxC</name>
    <name type="ordered locus">Noc_2854</name>
</gene>
<accession>Q3J796</accession>
<keyword id="KW-0378">Hydrolase</keyword>
<keyword id="KW-0441">Lipid A biosynthesis</keyword>
<keyword id="KW-0444">Lipid biosynthesis</keyword>
<keyword id="KW-0443">Lipid metabolism</keyword>
<keyword id="KW-0479">Metal-binding</keyword>
<keyword id="KW-1185">Reference proteome</keyword>
<keyword id="KW-0862">Zinc</keyword>